<feature type="chain" id="PRO_0000090546" description="Rhamnulokinase">
    <location>
        <begin position="1"/>
        <end position="489"/>
    </location>
</feature>
<feature type="active site" description="Proton acceptor" evidence="1">
    <location>
        <position position="237"/>
    </location>
</feature>
<feature type="binding site" evidence="1">
    <location>
        <begin position="13"/>
        <end position="17"/>
    </location>
    <ligand>
        <name>ATP</name>
        <dbReference type="ChEBI" id="CHEBI:30616"/>
    </ligand>
</feature>
<feature type="binding site" evidence="1">
    <location>
        <position position="83"/>
    </location>
    <ligand>
        <name>substrate</name>
    </ligand>
</feature>
<feature type="binding site" evidence="1">
    <location>
        <begin position="236"/>
        <end position="238"/>
    </location>
    <ligand>
        <name>substrate</name>
    </ligand>
</feature>
<feature type="binding site" evidence="1">
    <location>
        <position position="259"/>
    </location>
    <ligand>
        <name>ATP</name>
        <dbReference type="ChEBI" id="CHEBI:30616"/>
    </ligand>
</feature>
<feature type="binding site" evidence="1">
    <location>
        <position position="296"/>
    </location>
    <ligand>
        <name>substrate</name>
    </ligand>
</feature>
<feature type="binding site" evidence="1">
    <location>
        <position position="304"/>
    </location>
    <ligand>
        <name>ATP</name>
        <dbReference type="ChEBI" id="CHEBI:30616"/>
    </ligand>
</feature>
<feature type="binding site" evidence="1">
    <location>
        <position position="402"/>
    </location>
    <ligand>
        <name>ATP</name>
        <dbReference type="ChEBI" id="CHEBI:30616"/>
    </ligand>
</feature>
<feature type="disulfide bond" evidence="1">
    <location>
        <begin position="68"/>
        <end position="222"/>
    </location>
</feature>
<feature type="disulfide bond" evidence="1">
    <location>
        <begin position="353"/>
        <end position="370"/>
    </location>
</feature>
<feature type="disulfide bond" evidence="1">
    <location>
        <begin position="413"/>
        <end position="417"/>
    </location>
</feature>
<evidence type="ECO:0000255" key="1">
    <source>
        <dbReference type="HAMAP-Rule" id="MF_01535"/>
    </source>
</evidence>
<accession>Q83IU3</accession>
<accession>Q7BZF2</accession>
<name>RHAB_SHIFL</name>
<reference key="1">
    <citation type="journal article" date="2002" name="Nucleic Acids Res.">
        <title>Genome sequence of Shigella flexneri 2a: insights into pathogenicity through comparison with genomes of Escherichia coli K12 and O157.</title>
        <authorList>
            <person name="Jin Q."/>
            <person name="Yuan Z."/>
            <person name="Xu J."/>
            <person name="Wang Y."/>
            <person name="Shen Y."/>
            <person name="Lu W."/>
            <person name="Wang J."/>
            <person name="Liu H."/>
            <person name="Yang J."/>
            <person name="Yang F."/>
            <person name="Zhang X."/>
            <person name="Zhang J."/>
            <person name="Yang G."/>
            <person name="Wu H."/>
            <person name="Qu D."/>
            <person name="Dong J."/>
            <person name="Sun L."/>
            <person name="Xue Y."/>
            <person name="Zhao A."/>
            <person name="Gao Y."/>
            <person name="Zhu J."/>
            <person name="Kan B."/>
            <person name="Ding K."/>
            <person name="Chen S."/>
            <person name="Cheng H."/>
            <person name="Yao Z."/>
            <person name="He B."/>
            <person name="Chen R."/>
            <person name="Ma D."/>
            <person name="Qiang B."/>
            <person name="Wen Y."/>
            <person name="Hou Y."/>
            <person name="Yu J."/>
        </authorList>
    </citation>
    <scope>NUCLEOTIDE SEQUENCE [LARGE SCALE GENOMIC DNA]</scope>
    <source>
        <strain>301 / Serotype 2a</strain>
    </source>
</reference>
<reference key="2">
    <citation type="journal article" date="2003" name="Infect. Immun.">
        <title>Complete genome sequence and comparative genomics of Shigella flexneri serotype 2a strain 2457T.</title>
        <authorList>
            <person name="Wei J."/>
            <person name="Goldberg M.B."/>
            <person name="Burland V."/>
            <person name="Venkatesan M.M."/>
            <person name="Deng W."/>
            <person name="Fournier G."/>
            <person name="Mayhew G.F."/>
            <person name="Plunkett G. III"/>
            <person name="Rose D.J."/>
            <person name="Darling A."/>
            <person name="Mau B."/>
            <person name="Perna N.T."/>
            <person name="Payne S.M."/>
            <person name="Runyen-Janecky L.J."/>
            <person name="Zhou S."/>
            <person name="Schwartz D.C."/>
            <person name="Blattner F.R."/>
        </authorList>
    </citation>
    <scope>NUCLEOTIDE SEQUENCE [LARGE SCALE GENOMIC DNA]</scope>
    <source>
        <strain>ATCC 700930 / 2457T / Serotype 2a</strain>
    </source>
</reference>
<protein>
    <recommendedName>
        <fullName evidence="1">Rhamnulokinase</fullName>
        <shortName evidence="1">RhaB</shortName>
        <ecNumber evidence="1">2.7.1.5</ecNumber>
    </recommendedName>
    <alternativeName>
        <fullName evidence="1">ATP:L-rhamnulose phosphotransferase</fullName>
    </alternativeName>
    <alternativeName>
        <fullName evidence="1">L-rhamnulose 1-kinase</fullName>
    </alternativeName>
    <alternativeName>
        <fullName evidence="1">Rhamnulose kinase</fullName>
    </alternativeName>
</protein>
<sequence length="489" mass="54050">MTFRNCVAVDLGASSGRVMLARYERECRSLTLREIHRFNNGLHSQNGYVTWDVDSLESAIRLGLNKVCEEGIRIDSIGIDTWGVDFVLLDQQGQRVGLPVAYRDSRTNGLMPQAQQQLGKRDIYQRSGIQFLPFNTLYQLRALTEQQPELIPHIAHALLMPDYFSYRLTGKMNWEYTNATTTQLVNINSDDWDESLLAWSGANKAWFGRPTHPGNVIGHWICPQGNEIPVVAVASHDTASAVIASPLNGSRAAYLSSGTWSLMGFESQTPFTNDTALAANITNEGGAEGRYRVLKNIMGLWLLQRVLQERQINDLPALIAATQALPACRFIINPNDDRFINPDEMCSEIQAACRETAQPIPGSDAELARCIFDSLALLYADVLHELAQLRGEDFSQLHIVGGGCQNTLLNQLCADACGIRVIAGPVEASTLGNIGIELMTLDELNNVDDFRQVVSTTANLTTFTPNPDSEIAHYVAQIHSTRQTKELCA</sequence>
<gene>
    <name evidence="1" type="primary">rhaB</name>
    <name type="ordered locus">SF3981</name>
    <name type="ordered locus">S3767</name>
</gene>
<keyword id="KW-0067">ATP-binding</keyword>
<keyword id="KW-1015">Disulfide bond</keyword>
<keyword id="KW-0418">Kinase</keyword>
<keyword id="KW-0460">Magnesium</keyword>
<keyword id="KW-0547">Nucleotide-binding</keyword>
<keyword id="KW-1185">Reference proteome</keyword>
<keyword id="KW-0684">Rhamnose metabolism</keyword>
<keyword id="KW-0808">Transferase</keyword>
<organism>
    <name type="scientific">Shigella flexneri</name>
    <dbReference type="NCBI Taxonomy" id="623"/>
    <lineage>
        <taxon>Bacteria</taxon>
        <taxon>Pseudomonadati</taxon>
        <taxon>Pseudomonadota</taxon>
        <taxon>Gammaproteobacteria</taxon>
        <taxon>Enterobacterales</taxon>
        <taxon>Enterobacteriaceae</taxon>
        <taxon>Shigella</taxon>
    </lineage>
</organism>
<dbReference type="EC" id="2.7.1.5" evidence="1"/>
<dbReference type="EMBL" id="AE005674">
    <property type="protein sequence ID" value="AAN45415.1"/>
    <property type="molecule type" value="Genomic_DNA"/>
</dbReference>
<dbReference type="EMBL" id="AE014073">
    <property type="protein sequence ID" value="AAP18784.1"/>
    <property type="molecule type" value="Genomic_DNA"/>
</dbReference>
<dbReference type="RefSeq" id="NP_709708.1">
    <property type="nucleotide sequence ID" value="NC_004337.2"/>
</dbReference>
<dbReference type="RefSeq" id="WP_000144088.1">
    <property type="nucleotide sequence ID" value="NZ_WPGW01000095.1"/>
</dbReference>
<dbReference type="SMR" id="Q83IU3"/>
<dbReference type="STRING" id="198214.SF3981"/>
<dbReference type="PaxDb" id="198214-SF3981"/>
<dbReference type="GeneID" id="1025156"/>
<dbReference type="KEGG" id="sfl:SF3981"/>
<dbReference type="KEGG" id="sfx:S3767"/>
<dbReference type="PATRIC" id="fig|198214.7.peg.4690"/>
<dbReference type="HOGENOM" id="CLU_039395_0_0_6"/>
<dbReference type="UniPathway" id="UPA00541">
    <property type="reaction ID" value="UER00602"/>
</dbReference>
<dbReference type="Proteomes" id="UP000001006">
    <property type="component" value="Chromosome"/>
</dbReference>
<dbReference type="Proteomes" id="UP000002673">
    <property type="component" value="Chromosome"/>
</dbReference>
<dbReference type="GO" id="GO:0005829">
    <property type="term" value="C:cytosol"/>
    <property type="evidence" value="ECO:0007669"/>
    <property type="project" value="TreeGrafter"/>
</dbReference>
<dbReference type="GO" id="GO:0005524">
    <property type="term" value="F:ATP binding"/>
    <property type="evidence" value="ECO:0007669"/>
    <property type="project" value="UniProtKB-KW"/>
</dbReference>
<dbReference type="GO" id="GO:0004370">
    <property type="term" value="F:glycerol kinase activity"/>
    <property type="evidence" value="ECO:0007669"/>
    <property type="project" value="TreeGrafter"/>
</dbReference>
<dbReference type="GO" id="GO:0008993">
    <property type="term" value="F:rhamnulokinase activity"/>
    <property type="evidence" value="ECO:0007669"/>
    <property type="project" value="UniProtKB-UniRule"/>
</dbReference>
<dbReference type="GO" id="GO:0006071">
    <property type="term" value="P:glycerol metabolic process"/>
    <property type="evidence" value="ECO:0007669"/>
    <property type="project" value="TreeGrafter"/>
</dbReference>
<dbReference type="GO" id="GO:0019301">
    <property type="term" value="P:rhamnose catabolic process"/>
    <property type="evidence" value="ECO:0007669"/>
    <property type="project" value="UniProtKB-UniRule"/>
</dbReference>
<dbReference type="CDD" id="cd07771">
    <property type="entry name" value="ASKHA_NBD_FGGY_RhaB-like"/>
    <property type="match status" value="1"/>
</dbReference>
<dbReference type="FunFam" id="3.30.420.40:FF:000064">
    <property type="entry name" value="Rhamnulokinase"/>
    <property type="match status" value="1"/>
</dbReference>
<dbReference type="FunFam" id="3.30.420.40:FF:000073">
    <property type="entry name" value="Rhamnulokinase"/>
    <property type="match status" value="1"/>
</dbReference>
<dbReference type="Gene3D" id="3.30.420.40">
    <property type="match status" value="2"/>
</dbReference>
<dbReference type="HAMAP" id="MF_01535">
    <property type="entry name" value="Rhamnulokinase"/>
    <property type="match status" value="1"/>
</dbReference>
<dbReference type="InterPro" id="IPR043129">
    <property type="entry name" value="ATPase_NBD"/>
</dbReference>
<dbReference type="InterPro" id="IPR018485">
    <property type="entry name" value="FGGY_C"/>
</dbReference>
<dbReference type="InterPro" id="IPR018484">
    <property type="entry name" value="FGGY_N"/>
</dbReference>
<dbReference type="InterPro" id="IPR013449">
    <property type="entry name" value="Rhamnulokinase"/>
</dbReference>
<dbReference type="NCBIfam" id="NF007925">
    <property type="entry name" value="PRK10640.1"/>
    <property type="match status" value="1"/>
</dbReference>
<dbReference type="NCBIfam" id="TIGR02627">
    <property type="entry name" value="rhamnulo_kin"/>
    <property type="match status" value="1"/>
</dbReference>
<dbReference type="PANTHER" id="PTHR10196:SF93">
    <property type="entry name" value="L-RHAMNULOKINASE"/>
    <property type="match status" value="1"/>
</dbReference>
<dbReference type="PANTHER" id="PTHR10196">
    <property type="entry name" value="SUGAR KINASE"/>
    <property type="match status" value="1"/>
</dbReference>
<dbReference type="Pfam" id="PF02782">
    <property type="entry name" value="FGGY_C"/>
    <property type="match status" value="1"/>
</dbReference>
<dbReference type="Pfam" id="PF00370">
    <property type="entry name" value="FGGY_N"/>
    <property type="match status" value="1"/>
</dbReference>
<dbReference type="SUPFAM" id="SSF53067">
    <property type="entry name" value="Actin-like ATPase domain"/>
    <property type="match status" value="2"/>
</dbReference>
<comment type="function">
    <text evidence="1">Involved in the catabolism of L-rhamnose (6-deoxy-L-mannose). Catalyzes the transfer of the gamma-phosphate group from ATP to the 1-hydroxyl group of L-rhamnulose to yield L-rhamnulose 1-phosphate.</text>
</comment>
<comment type="catalytic activity">
    <reaction evidence="1">
        <text>L-rhamnulose + ATP = L-rhamnulose 1-phosphate + ADP + H(+)</text>
        <dbReference type="Rhea" id="RHEA:20117"/>
        <dbReference type="ChEBI" id="CHEBI:15378"/>
        <dbReference type="ChEBI" id="CHEBI:17897"/>
        <dbReference type="ChEBI" id="CHEBI:30616"/>
        <dbReference type="ChEBI" id="CHEBI:58313"/>
        <dbReference type="ChEBI" id="CHEBI:456216"/>
        <dbReference type="EC" id="2.7.1.5"/>
    </reaction>
</comment>
<comment type="cofactor">
    <cofactor evidence="1">
        <name>Mg(2+)</name>
        <dbReference type="ChEBI" id="CHEBI:18420"/>
    </cofactor>
</comment>
<comment type="pathway">
    <text evidence="1">Carbohydrate degradation; L-rhamnose degradation; glycerone phosphate from L-rhamnose: step 2/3.</text>
</comment>
<comment type="similarity">
    <text evidence="1">Belongs to the rhamnulokinase family.</text>
</comment>
<proteinExistence type="inferred from homology"/>